<gene>
    <name type="primary">clpL</name>
    <name type="ordered locus">SACOL2563</name>
</gene>
<keyword id="KW-0067">ATP-binding</keyword>
<keyword id="KW-0143">Chaperone</keyword>
<keyword id="KW-0547">Nucleotide-binding</keyword>
<name>CLPL_STAAC</name>
<evidence type="ECO:0000250" key="1"/>
<evidence type="ECO:0000255" key="2"/>
<evidence type="ECO:0000256" key="3">
    <source>
        <dbReference type="SAM" id="MobiDB-lite"/>
    </source>
</evidence>
<evidence type="ECO:0000305" key="4"/>
<organism>
    <name type="scientific">Staphylococcus aureus (strain COL)</name>
    <dbReference type="NCBI Taxonomy" id="93062"/>
    <lineage>
        <taxon>Bacteria</taxon>
        <taxon>Bacillati</taxon>
        <taxon>Bacillota</taxon>
        <taxon>Bacilli</taxon>
        <taxon>Bacillales</taxon>
        <taxon>Staphylococcaceae</taxon>
        <taxon>Staphylococcus</taxon>
    </lineage>
</organism>
<feature type="chain" id="PRO_0000269497" description="ATP-dependent Clp protease ATP-binding subunit ClpL">
    <location>
        <begin position="1"/>
        <end position="701"/>
    </location>
</feature>
<feature type="domain" description="UVR">
    <location>
        <begin position="336"/>
        <end position="371"/>
    </location>
</feature>
<feature type="region of interest" description="Disordered" evidence="3">
    <location>
        <begin position="47"/>
        <end position="79"/>
    </location>
</feature>
<feature type="region of interest" description="I">
    <location>
        <begin position="81"/>
        <end position="332"/>
    </location>
</feature>
<feature type="region of interest" description="II">
    <location>
        <begin position="383"/>
        <end position="575"/>
    </location>
</feature>
<feature type="compositionally biased region" description="Polar residues" evidence="3">
    <location>
        <begin position="47"/>
        <end position="57"/>
    </location>
</feature>
<feature type="compositionally biased region" description="Low complexity" evidence="3">
    <location>
        <begin position="58"/>
        <end position="72"/>
    </location>
</feature>
<feature type="binding site" evidence="2">
    <location>
        <begin position="126"/>
        <end position="133"/>
    </location>
    <ligand>
        <name>ATP</name>
        <dbReference type="ChEBI" id="CHEBI:30616"/>
    </ligand>
</feature>
<feature type="binding site" evidence="2">
    <location>
        <begin position="457"/>
        <end position="464"/>
    </location>
    <ligand>
        <name>ATP</name>
        <dbReference type="ChEBI" id="CHEBI:30616"/>
    </ligand>
</feature>
<accession>Q5HD02</accession>
<sequence length="701" mass="77836">MNNGFFNSDFDSIFRRMMKDMQGSNQVGNKKYYINGKEVSPEELAQLTQQGGNHSAEQSAQAFQQAAQRQQGQQGGNGNYLEQIGRNLTQEARDGLLDPVIGRDKEIQETAEVLSRRTKNNPILVGEAGVGKTAIVEGLAQAIVEGNVPAAIKDKEIISVDISSLEAGTQYRGAFEENIQKLIEGVKSSQNAVLFFDEIHQIIGSGATGSDSGSKGLSDILKPALSRGEISIIGATTQDEYRNNILKDAALTRRFNEVLVNEPSAKDTVEILKGIREKFEEHHQVKLPDDVLKACVDLSIQYIPQRLLPDKAIDVLDITAAHLSAQSPAVDKVETEKRISELENDKRKAVSAEEYKKADDIQNEIKSLQDKLENSNGEHTAVATVHDISDTIQRLTGIPVSQMDDNDIERLKNISNRLRSKIIGQDQAVEMVSRAIRRNRAGFDDGNRPIGSFLFVGPTGVGKTELAKQLAIDLFGNKDALIRLDMSEYSDTTAVSKMIGTTAGYVGYDDNSNTLTEKVRRNPYSVILFDEIEKANPQILTLLLQVMDDGNLTDGQGNVINFKNTIIICTSNAGFGNGNDAEEKDIMHEMKKFFRPEFLNRFNGIVEFLHLDKDALQDIVNLLLDDVQVTLDKKGITMDVSQDAKDWLIEEGYDEELGARPLRRIVEQQVRDKITDYYLDHTDVKHVDIDVEDNELVVKGK</sequence>
<comment type="function">
    <text evidence="1">Required for the development of induced thermotolerance.</text>
</comment>
<comment type="similarity">
    <text evidence="4">Belongs to the ClpA/ClpB family. ClpL subfamily.</text>
</comment>
<reference key="1">
    <citation type="journal article" date="2005" name="J. Bacteriol.">
        <title>Insights on evolution of virulence and resistance from the complete genome analysis of an early methicillin-resistant Staphylococcus aureus strain and a biofilm-producing methicillin-resistant Staphylococcus epidermidis strain.</title>
        <authorList>
            <person name="Gill S.R."/>
            <person name="Fouts D.E."/>
            <person name="Archer G.L."/>
            <person name="Mongodin E.F."/>
            <person name="DeBoy R.T."/>
            <person name="Ravel J."/>
            <person name="Paulsen I.T."/>
            <person name="Kolonay J.F."/>
            <person name="Brinkac L.M."/>
            <person name="Beanan M.J."/>
            <person name="Dodson R.J."/>
            <person name="Daugherty S.C."/>
            <person name="Madupu R."/>
            <person name="Angiuoli S.V."/>
            <person name="Durkin A.S."/>
            <person name="Haft D.H."/>
            <person name="Vamathevan J.J."/>
            <person name="Khouri H."/>
            <person name="Utterback T.R."/>
            <person name="Lee C."/>
            <person name="Dimitrov G."/>
            <person name="Jiang L."/>
            <person name="Qin H."/>
            <person name="Weidman J."/>
            <person name="Tran K."/>
            <person name="Kang K.H."/>
            <person name="Hance I.R."/>
            <person name="Nelson K.E."/>
            <person name="Fraser C.M."/>
        </authorList>
    </citation>
    <scope>NUCLEOTIDE SEQUENCE [LARGE SCALE GENOMIC DNA]</scope>
    <source>
        <strain>COL</strain>
    </source>
</reference>
<protein>
    <recommendedName>
        <fullName>ATP-dependent Clp protease ATP-binding subunit ClpL</fullName>
    </recommendedName>
</protein>
<proteinExistence type="inferred from homology"/>
<dbReference type="EMBL" id="CP000046">
    <property type="protein sequence ID" value="AAW37339.1"/>
    <property type="molecule type" value="Genomic_DNA"/>
</dbReference>
<dbReference type="RefSeq" id="WP_001058981.1">
    <property type="nucleotide sequence ID" value="NZ_JBGOFO010000001.1"/>
</dbReference>
<dbReference type="SMR" id="Q5HD02"/>
<dbReference type="KEGG" id="sac:SACOL2563"/>
<dbReference type="HOGENOM" id="CLU_005070_4_3_9"/>
<dbReference type="Proteomes" id="UP000000530">
    <property type="component" value="Chromosome"/>
</dbReference>
<dbReference type="GO" id="GO:0005737">
    <property type="term" value="C:cytoplasm"/>
    <property type="evidence" value="ECO:0007669"/>
    <property type="project" value="TreeGrafter"/>
</dbReference>
<dbReference type="GO" id="GO:0005524">
    <property type="term" value="F:ATP binding"/>
    <property type="evidence" value="ECO:0007669"/>
    <property type="project" value="UniProtKB-KW"/>
</dbReference>
<dbReference type="GO" id="GO:0016887">
    <property type="term" value="F:ATP hydrolysis activity"/>
    <property type="evidence" value="ECO:0007669"/>
    <property type="project" value="InterPro"/>
</dbReference>
<dbReference type="GO" id="GO:0034605">
    <property type="term" value="P:cellular response to heat"/>
    <property type="evidence" value="ECO:0007669"/>
    <property type="project" value="TreeGrafter"/>
</dbReference>
<dbReference type="CDD" id="cd00009">
    <property type="entry name" value="AAA"/>
    <property type="match status" value="1"/>
</dbReference>
<dbReference type="CDD" id="cd19499">
    <property type="entry name" value="RecA-like_ClpB_Hsp104-like"/>
    <property type="match status" value="1"/>
</dbReference>
<dbReference type="FunFam" id="3.40.50.300:FF:000025">
    <property type="entry name" value="ATP-dependent Clp protease subunit"/>
    <property type="match status" value="1"/>
</dbReference>
<dbReference type="Gene3D" id="1.10.8.60">
    <property type="match status" value="2"/>
</dbReference>
<dbReference type="Gene3D" id="3.40.50.300">
    <property type="entry name" value="P-loop containing nucleotide triphosphate hydrolases"/>
    <property type="match status" value="2"/>
</dbReference>
<dbReference type="Gene3D" id="4.10.860.10">
    <property type="entry name" value="UVR domain"/>
    <property type="match status" value="1"/>
</dbReference>
<dbReference type="InterPro" id="IPR003593">
    <property type="entry name" value="AAA+_ATPase"/>
</dbReference>
<dbReference type="InterPro" id="IPR003959">
    <property type="entry name" value="ATPase_AAA_core"/>
</dbReference>
<dbReference type="InterPro" id="IPR019489">
    <property type="entry name" value="Clp_ATPase_C"/>
</dbReference>
<dbReference type="InterPro" id="IPR001270">
    <property type="entry name" value="ClpA/B"/>
</dbReference>
<dbReference type="InterPro" id="IPR041546">
    <property type="entry name" value="ClpA/ClpB_AAA_lid"/>
</dbReference>
<dbReference type="InterPro" id="IPR050130">
    <property type="entry name" value="ClpA_ClpB"/>
</dbReference>
<dbReference type="InterPro" id="IPR027417">
    <property type="entry name" value="P-loop_NTPase"/>
</dbReference>
<dbReference type="PANTHER" id="PTHR11638">
    <property type="entry name" value="ATP-DEPENDENT CLP PROTEASE"/>
    <property type="match status" value="1"/>
</dbReference>
<dbReference type="PANTHER" id="PTHR11638:SF188">
    <property type="entry name" value="ATP-DEPENDENT CLP PROTEASE ATP-BINDING SUBUNIT CLPL"/>
    <property type="match status" value="1"/>
</dbReference>
<dbReference type="Pfam" id="PF00004">
    <property type="entry name" value="AAA"/>
    <property type="match status" value="1"/>
</dbReference>
<dbReference type="Pfam" id="PF07724">
    <property type="entry name" value="AAA_2"/>
    <property type="match status" value="1"/>
</dbReference>
<dbReference type="Pfam" id="PF17871">
    <property type="entry name" value="AAA_lid_9"/>
    <property type="match status" value="1"/>
</dbReference>
<dbReference type="Pfam" id="PF10431">
    <property type="entry name" value="ClpB_D2-small"/>
    <property type="match status" value="1"/>
</dbReference>
<dbReference type="PRINTS" id="PR00300">
    <property type="entry name" value="CLPPROTEASEA"/>
</dbReference>
<dbReference type="SMART" id="SM00382">
    <property type="entry name" value="AAA"/>
    <property type="match status" value="2"/>
</dbReference>
<dbReference type="SMART" id="SM01086">
    <property type="entry name" value="ClpB_D2-small"/>
    <property type="match status" value="1"/>
</dbReference>
<dbReference type="SUPFAM" id="SSF52540">
    <property type="entry name" value="P-loop containing nucleoside triphosphate hydrolases"/>
    <property type="match status" value="2"/>
</dbReference>